<keyword id="KW-0255">Endonuclease</keyword>
<keyword id="KW-0378">Hydrolase</keyword>
<keyword id="KW-0479">Metal-binding</keyword>
<keyword id="KW-0540">Nuclease</keyword>
<keyword id="KW-0819">tRNA processing</keyword>
<keyword id="KW-0862">Zinc</keyword>
<sequence>MLDVCLLGTAGMMPLPNRWLTALSLKYNGSNILIDCGEGTQIAMKEAGINFKPIDILCITHFHADHISGLPGLLLTMGNAERTEPLTIIGPKGLTRVVTALRTIAPELPFEIKCIELNEQDEYFEMNGYHIHAFRVKHAVLCYGYSVEIKRSGRFSVERANEKEIPMRLWNPLQKGNTVEFEGRVYTPDMVLGPARKGIKVTYCTDSRPLEHIVEAAEGSDLFICEGMYAEKEKIVKAKQYKHMTFYEAADMAKRAGVKELWLTHFSPSLVRADDYMPQVRDIFANAYLGKDAKSVELMFDED</sequence>
<reference key="1">
    <citation type="journal article" date="2009" name="Proc. Natl. Acad. Sci. U.S.A.">
        <title>Characterizing a model human gut microbiota composed of members of its two dominant bacterial phyla.</title>
        <authorList>
            <person name="Mahowald M.A."/>
            <person name="Rey F.E."/>
            <person name="Seedorf H."/>
            <person name="Turnbaugh P.J."/>
            <person name="Fulton R.S."/>
            <person name="Wollam A."/>
            <person name="Shah N."/>
            <person name="Wang C."/>
            <person name="Magrini V."/>
            <person name="Wilson R.K."/>
            <person name="Cantarel B.L."/>
            <person name="Coutinho P.M."/>
            <person name="Henrissat B."/>
            <person name="Crock L.W."/>
            <person name="Russell A."/>
            <person name="Verberkmoes N.C."/>
            <person name="Hettich R.L."/>
            <person name="Gordon J.I."/>
        </authorList>
    </citation>
    <scope>NUCLEOTIDE SEQUENCE [LARGE SCALE GENOMIC DNA]</scope>
    <source>
        <strain>ATCC 33656 / DSM 3377 / JCM 17463 / KCTC 5835 / LMG 30912 / VPI 0990</strain>
    </source>
</reference>
<comment type="function">
    <text evidence="1">Zinc phosphodiesterase, which displays some tRNA 3'-processing endonuclease activity. Probably involved in tRNA maturation, by removing a 3'-trailer from precursor tRNA.</text>
</comment>
<comment type="catalytic activity">
    <reaction evidence="1">
        <text>Endonucleolytic cleavage of RNA, removing extra 3' nucleotides from tRNA precursor, generating 3' termini of tRNAs. A 3'-hydroxy group is left at the tRNA terminus and a 5'-phosphoryl group is left at the trailer molecule.</text>
        <dbReference type="EC" id="3.1.26.11"/>
    </reaction>
</comment>
<comment type="cofactor">
    <cofactor evidence="1">
        <name>Zn(2+)</name>
        <dbReference type="ChEBI" id="CHEBI:29105"/>
    </cofactor>
    <text evidence="1">Binds 2 Zn(2+) ions.</text>
</comment>
<comment type="subunit">
    <text evidence="1">Homodimer.</text>
</comment>
<comment type="similarity">
    <text evidence="1">Belongs to the RNase Z family.</text>
</comment>
<name>RNZ_AGARV</name>
<gene>
    <name evidence="1" type="primary">rnz</name>
    <name type="ordered locus">EUBREC_0839</name>
</gene>
<proteinExistence type="inferred from homology"/>
<accession>C4ZFN9</accession>
<dbReference type="EC" id="3.1.26.11" evidence="1"/>
<dbReference type="EMBL" id="CP001107">
    <property type="protein sequence ID" value="ACR74623.1"/>
    <property type="molecule type" value="Genomic_DNA"/>
</dbReference>
<dbReference type="RefSeq" id="WP_012741725.1">
    <property type="nucleotide sequence ID" value="NC_012781.1"/>
</dbReference>
<dbReference type="SMR" id="C4ZFN9"/>
<dbReference type="STRING" id="515619.EUBREC_0839"/>
<dbReference type="PaxDb" id="515619-EUBREC_0839"/>
<dbReference type="GeneID" id="86987708"/>
<dbReference type="KEGG" id="ere:EUBREC_0839"/>
<dbReference type="HOGENOM" id="CLU_031317_2_1_9"/>
<dbReference type="Proteomes" id="UP000001477">
    <property type="component" value="Chromosome"/>
</dbReference>
<dbReference type="GO" id="GO:0042781">
    <property type="term" value="F:3'-tRNA processing endoribonuclease activity"/>
    <property type="evidence" value="ECO:0007669"/>
    <property type="project" value="UniProtKB-UniRule"/>
</dbReference>
<dbReference type="GO" id="GO:0008270">
    <property type="term" value="F:zinc ion binding"/>
    <property type="evidence" value="ECO:0007669"/>
    <property type="project" value="UniProtKB-UniRule"/>
</dbReference>
<dbReference type="CDD" id="cd07717">
    <property type="entry name" value="RNaseZ_ZiPD-like_MBL-fold"/>
    <property type="match status" value="1"/>
</dbReference>
<dbReference type="Gene3D" id="3.60.15.10">
    <property type="entry name" value="Ribonuclease Z/Hydroxyacylglutathione hydrolase-like"/>
    <property type="match status" value="1"/>
</dbReference>
<dbReference type="HAMAP" id="MF_01818">
    <property type="entry name" value="RNase_Z_BN"/>
    <property type="match status" value="1"/>
</dbReference>
<dbReference type="InterPro" id="IPR001279">
    <property type="entry name" value="Metallo-B-lactamas"/>
</dbReference>
<dbReference type="InterPro" id="IPR036866">
    <property type="entry name" value="RibonucZ/Hydroxyglut_hydro"/>
</dbReference>
<dbReference type="InterPro" id="IPR013471">
    <property type="entry name" value="RNase_Z/BN"/>
</dbReference>
<dbReference type="NCBIfam" id="NF000801">
    <property type="entry name" value="PRK00055.1-3"/>
    <property type="match status" value="1"/>
</dbReference>
<dbReference type="NCBIfam" id="TIGR02651">
    <property type="entry name" value="RNase_Z"/>
    <property type="match status" value="1"/>
</dbReference>
<dbReference type="PANTHER" id="PTHR46018">
    <property type="entry name" value="ZINC PHOSPHODIESTERASE ELAC PROTEIN 1"/>
    <property type="match status" value="1"/>
</dbReference>
<dbReference type="PANTHER" id="PTHR46018:SF2">
    <property type="entry name" value="ZINC PHOSPHODIESTERASE ELAC PROTEIN 1"/>
    <property type="match status" value="1"/>
</dbReference>
<dbReference type="Pfam" id="PF00753">
    <property type="entry name" value="Lactamase_B"/>
    <property type="match status" value="1"/>
</dbReference>
<dbReference type="Pfam" id="PF12706">
    <property type="entry name" value="Lactamase_B_2"/>
    <property type="match status" value="1"/>
</dbReference>
<dbReference type="SUPFAM" id="SSF56281">
    <property type="entry name" value="Metallo-hydrolase/oxidoreductase"/>
    <property type="match status" value="1"/>
</dbReference>
<organism>
    <name type="scientific">Agathobacter rectalis (strain ATCC 33656 / DSM 3377 / JCM 17463 / KCTC 5835 / VPI 0990)</name>
    <name type="common">Eubacterium rectale</name>
    <dbReference type="NCBI Taxonomy" id="515619"/>
    <lineage>
        <taxon>Bacteria</taxon>
        <taxon>Bacillati</taxon>
        <taxon>Bacillota</taxon>
        <taxon>Clostridia</taxon>
        <taxon>Lachnospirales</taxon>
        <taxon>Lachnospiraceae</taxon>
        <taxon>Agathobacter</taxon>
    </lineage>
</organism>
<feature type="chain" id="PRO_1000216007" description="Ribonuclease Z">
    <location>
        <begin position="1"/>
        <end position="303"/>
    </location>
</feature>
<feature type="active site" description="Proton acceptor" evidence="1">
    <location>
        <position position="65"/>
    </location>
</feature>
<feature type="binding site" evidence="1">
    <location>
        <position position="61"/>
    </location>
    <ligand>
        <name>Zn(2+)</name>
        <dbReference type="ChEBI" id="CHEBI:29105"/>
        <label>1</label>
        <note>catalytic</note>
    </ligand>
</feature>
<feature type="binding site" evidence="1">
    <location>
        <position position="63"/>
    </location>
    <ligand>
        <name>Zn(2+)</name>
        <dbReference type="ChEBI" id="CHEBI:29105"/>
        <label>1</label>
        <note>catalytic</note>
    </ligand>
</feature>
<feature type="binding site" evidence="1">
    <location>
        <position position="65"/>
    </location>
    <ligand>
        <name>Zn(2+)</name>
        <dbReference type="ChEBI" id="CHEBI:29105"/>
        <label>2</label>
        <note>catalytic</note>
    </ligand>
</feature>
<feature type="binding site" evidence="1">
    <location>
        <position position="66"/>
    </location>
    <ligand>
        <name>Zn(2+)</name>
        <dbReference type="ChEBI" id="CHEBI:29105"/>
        <label>2</label>
        <note>catalytic</note>
    </ligand>
</feature>
<feature type="binding site" evidence="1">
    <location>
        <position position="138"/>
    </location>
    <ligand>
        <name>Zn(2+)</name>
        <dbReference type="ChEBI" id="CHEBI:29105"/>
        <label>1</label>
        <note>catalytic</note>
    </ligand>
</feature>
<feature type="binding site" evidence="1">
    <location>
        <position position="206"/>
    </location>
    <ligand>
        <name>Zn(2+)</name>
        <dbReference type="ChEBI" id="CHEBI:29105"/>
        <label>1</label>
        <note>catalytic</note>
    </ligand>
</feature>
<feature type="binding site" evidence="1">
    <location>
        <position position="206"/>
    </location>
    <ligand>
        <name>Zn(2+)</name>
        <dbReference type="ChEBI" id="CHEBI:29105"/>
        <label>2</label>
        <note>catalytic</note>
    </ligand>
</feature>
<feature type="binding site" evidence="1">
    <location>
        <position position="265"/>
    </location>
    <ligand>
        <name>Zn(2+)</name>
        <dbReference type="ChEBI" id="CHEBI:29105"/>
        <label>2</label>
        <note>catalytic</note>
    </ligand>
</feature>
<protein>
    <recommendedName>
        <fullName evidence="1">Ribonuclease Z</fullName>
        <shortName evidence="1">RNase Z</shortName>
        <ecNumber evidence="1">3.1.26.11</ecNumber>
    </recommendedName>
    <alternativeName>
        <fullName evidence="1">tRNA 3 endonuclease</fullName>
    </alternativeName>
    <alternativeName>
        <fullName evidence="1">tRNase Z</fullName>
    </alternativeName>
</protein>
<evidence type="ECO:0000255" key="1">
    <source>
        <dbReference type="HAMAP-Rule" id="MF_01818"/>
    </source>
</evidence>